<sequence length="212" mass="23638">MLTPYGYPTILKTACIAILLSGAAHLFAKPLLPEALIFSVFLLLFTLYFFRDPIRTPPDKKRTVLAPADGKVLLVKPVNNHFTGPSSTLVSIFMSPFNVHVNRIPVDGTVTLLSYHQGTFMMAFDHRSLESNEKMEIGIENKELKLHFSQVSGFLARRIICSLQQGEQVERGKRFGMIRFGSRVDVIVPAHVEVTVKAGQHTKAGETVIARF</sequence>
<dbReference type="EC" id="4.1.1.65" evidence="1"/>
<dbReference type="EMBL" id="CP001097">
    <property type="protein sequence ID" value="ACD89712.1"/>
    <property type="molecule type" value="Genomic_DNA"/>
</dbReference>
<dbReference type="RefSeq" id="WP_012465593.1">
    <property type="nucleotide sequence ID" value="NC_010803.1"/>
</dbReference>
<dbReference type="STRING" id="290315.Clim_0625"/>
<dbReference type="KEGG" id="cli:Clim_0625"/>
<dbReference type="eggNOG" id="COG0688">
    <property type="taxonomic scope" value="Bacteria"/>
</dbReference>
<dbReference type="HOGENOM" id="CLU_072492_0_0_10"/>
<dbReference type="OrthoDB" id="9790893at2"/>
<dbReference type="UniPathway" id="UPA00558">
    <property type="reaction ID" value="UER00616"/>
</dbReference>
<dbReference type="Proteomes" id="UP000008841">
    <property type="component" value="Chromosome"/>
</dbReference>
<dbReference type="GO" id="GO:0005886">
    <property type="term" value="C:plasma membrane"/>
    <property type="evidence" value="ECO:0007669"/>
    <property type="project" value="UniProtKB-SubCell"/>
</dbReference>
<dbReference type="GO" id="GO:0004609">
    <property type="term" value="F:phosphatidylserine decarboxylase activity"/>
    <property type="evidence" value="ECO:0007669"/>
    <property type="project" value="UniProtKB-UniRule"/>
</dbReference>
<dbReference type="GO" id="GO:0006646">
    <property type="term" value="P:phosphatidylethanolamine biosynthetic process"/>
    <property type="evidence" value="ECO:0007669"/>
    <property type="project" value="UniProtKB-UniRule"/>
</dbReference>
<dbReference type="HAMAP" id="MF_00664">
    <property type="entry name" value="PS_decarb_PSD_A"/>
    <property type="match status" value="1"/>
</dbReference>
<dbReference type="InterPro" id="IPR003817">
    <property type="entry name" value="PS_Dcarbxylase"/>
</dbReference>
<dbReference type="InterPro" id="IPR033175">
    <property type="entry name" value="PSD-A"/>
</dbReference>
<dbReference type="NCBIfam" id="NF003678">
    <property type="entry name" value="PRK05305.1-2"/>
    <property type="match status" value="1"/>
</dbReference>
<dbReference type="NCBIfam" id="NF003682">
    <property type="entry name" value="PRK05305.2-2"/>
    <property type="match status" value="1"/>
</dbReference>
<dbReference type="NCBIfam" id="NF003685">
    <property type="entry name" value="PRK05305.2-5"/>
    <property type="match status" value="1"/>
</dbReference>
<dbReference type="PANTHER" id="PTHR35809">
    <property type="entry name" value="ARCHAETIDYLSERINE DECARBOXYLASE PROENZYME-RELATED"/>
    <property type="match status" value="1"/>
</dbReference>
<dbReference type="PANTHER" id="PTHR35809:SF1">
    <property type="entry name" value="ARCHAETIDYLSERINE DECARBOXYLASE PROENZYME-RELATED"/>
    <property type="match status" value="1"/>
</dbReference>
<dbReference type="Pfam" id="PF02666">
    <property type="entry name" value="PS_Dcarbxylase"/>
    <property type="match status" value="1"/>
</dbReference>
<evidence type="ECO:0000255" key="1">
    <source>
        <dbReference type="HAMAP-Rule" id="MF_00664"/>
    </source>
</evidence>
<comment type="function">
    <text evidence="1">Catalyzes the formation of phosphatidylethanolamine (PtdEtn) from phosphatidylserine (PtdSer).</text>
</comment>
<comment type="catalytic activity">
    <reaction evidence="1">
        <text>a 1,2-diacyl-sn-glycero-3-phospho-L-serine + H(+) = a 1,2-diacyl-sn-glycero-3-phosphoethanolamine + CO2</text>
        <dbReference type="Rhea" id="RHEA:20828"/>
        <dbReference type="ChEBI" id="CHEBI:15378"/>
        <dbReference type="ChEBI" id="CHEBI:16526"/>
        <dbReference type="ChEBI" id="CHEBI:57262"/>
        <dbReference type="ChEBI" id="CHEBI:64612"/>
        <dbReference type="EC" id="4.1.1.65"/>
    </reaction>
</comment>
<comment type="cofactor">
    <cofactor evidence="1">
        <name>pyruvate</name>
        <dbReference type="ChEBI" id="CHEBI:15361"/>
    </cofactor>
    <text evidence="1">Binds 1 pyruvoyl group covalently per subunit.</text>
</comment>
<comment type="pathway">
    <text evidence="1">Phospholipid metabolism; phosphatidylethanolamine biosynthesis; phosphatidylethanolamine from CDP-diacylglycerol: step 2/2.</text>
</comment>
<comment type="subunit">
    <text evidence="1">Heterodimer of a large membrane-associated beta subunit and a small pyruvoyl-containing alpha subunit.</text>
</comment>
<comment type="subcellular location">
    <subcellularLocation>
        <location evidence="1">Cell membrane</location>
        <topology evidence="1">Peripheral membrane protein</topology>
    </subcellularLocation>
</comment>
<comment type="PTM">
    <text evidence="1">Is synthesized initially as an inactive proenzyme. Formation of the active enzyme involves a self-maturation process in which the active site pyruvoyl group is generated from an internal serine residue via an autocatalytic post-translational modification. Two non-identical subunits are generated from the proenzyme in this reaction, and the pyruvate is formed at the N-terminus of the alpha chain, which is derived from the carboxyl end of the proenzyme. The post-translation cleavage follows an unusual pathway, termed non-hydrolytic serinolysis, in which the side chain hydroxyl group of the serine supplies its oxygen atom to form the C-terminus of the beta chain, while the remainder of the serine residue undergoes an oxidative deamination to produce ammonia and the pyruvoyl prosthetic group on the alpha chain.</text>
</comment>
<comment type="similarity">
    <text evidence="1">Belongs to the phosphatidylserine decarboxylase family. PSD-A subfamily.</text>
</comment>
<feature type="chain" id="PRO_1000131456" description="Phosphatidylserine decarboxylase beta chain" evidence="1">
    <location>
        <begin position="1"/>
        <end position="181"/>
    </location>
</feature>
<feature type="chain" id="PRO_1000131457" description="Phosphatidylserine decarboxylase alpha chain" evidence="1">
    <location>
        <begin position="182"/>
        <end position="212"/>
    </location>
</feature>
<feature type="active site" description="Schiff-base intermediate with substrate; via pyruvic acid" evidence="1">
    <location>
        <position position="182"/>
    </location>
</feature>
<feature type="site" description="Cleavage (non-hydrolytic); by autocatalysis" evidence="1">
    <location>
        <begin position="181"/>
        <end position="182"/>
    </location>
</feature>
<feature type="modified residue" description="Pyruvic acid (Ser); by autocatalysis" evidence="1">
    <location>
        <position position="182"/>
    </location>
</feature>
<keyword id="KW-1003">Cell membrane</keyword>
<keyword id="KW-0210">Decarboxylase</keyword>
<keyword id="KW-0444">Lipid biosynthesis</keyword>
<keyword id="KW-0443">Lipid metabolism</keyword>
<keyword id="KW-0456">Lyase</keyword>
<keyword id="KW-0472">Membrane</keyword>
<keyword id="KW-0594">Phospholipid biosynthesis</keyword>
<keyword id="KW-1208">Phospholipid metabolism</keyword>
<keyword id="KW-0670">Pyruvate</keyword>
<keyword id="KW-0865">Zymogen</keyword>
<accession>B3EH32</accession>
<protein>
    <recommendedName>
        <fullName evidence="1">Phosphatidylserine decarboxylase proenzyme</fullName>
        <ecNumber evidence="1">4.1.1.65</ecNumber>
    </recommendedName>
    <component>
        <recommendedName>
            <fullName evidence="1">Phosphatidylserine decarboxylase alpha chain</fullName>
        </recommendedName>
    </component>
    <component>
        <recommendedName>
            <fullName evidence="1">Phosphatidylserine decarboxylase beta chain</fullName>
        </recommendedName>
    </component>
</protein>
<reference key="1">
    <citation type="submission" date="2008-05" db="EMBL/GenBank/DDBJ databases">
        <title>Complete sequence of Chlorobium limicola DSM 245.</title>
        <authorList>
            <consortium name="US DOE Joint Genome Institute"/>
            <person name="Lucas S."/>
            <person name="Copeland A."/>
            <person name="Lapidus A."/>
            <person name="Glavina del Rio T."/>
            <person name="Dalin E."/>
            <person name="Tice H."/>
            <person name="Bruce D."/>
            <person name="Goodwin L."/>
            <person name="Pitluck S."/>
            <person name="Schmutz J."/>
            <person name="Larimer F."/>
            <person name="Land M."/>
            <person name="Hauser L."/>
            <person name="Kyrpides N."/>
            <person name="Ovchinnikova G."/>
            <person name="Zhao F."/>
            <person name="Li T."/>
            <person name="Liu Z."/>
            <person name="Overmann J."/>
            <person name="Bryant D.A."/>
            <person name="Richardson P."/>
        </authorList>
    </citation>
    <scope>NUCLEOTIDE SEQUENCE [LARGE SCALE GENOMIC DNA]</scope>
    <source>
        <strain>DSM 245 / NBRC 103803 / 6330</strain>
    </source>
</reference>
<gene>
    <name evidence="1" type="primary">psd</name>
    <name type="ordered locus">Clim_0625</name>
</gene>
<proteinExistence type="inferred from homology"/>
<organism>
    <name type="scientific">Chlorobium limicola (strain DSM 245 / NBRC 103803 / 6330)</name>
    <dbReference type="NCBI Taxonomy" id="290315"/>
    <lineage>
        <taxon>Bacteria</taxon>
        <taxon>Pseudomonadati</taxon>
        <taxon>Chlorobiota</taxon>
        <taxon>Chlorobiia</taxon>
        <taxon>Chlorobiales</taxon>
        <taxon>Chlorobiaceae</taxon>
        <taxon>Chlorobium/Pelodictyon group</taxon>
        <taxon>Chlorobium</taxon>
    </lineage>
</organism>
<name>PSD_CHLL2</name>